<keyword id="KW-1185">Reference proteome</keyword>
<keyword id="KW-0808">Transferase</keyword>
<keyword id="KW-0816">Tricarboxylic acid cycle</keyword>
<comment type="function">
    <text evidence="3 4">Involved in the catabolism of short chain fatty acids (SCFA) via the tricarboxylic acid (TCA)(acetyl degradation route) and via the 2-methylcitrate cycle II (propionate degradation route). Catalyzes the Claisen condensation of propionyl-CoA and oxaloacetate (OAA) to yield 2-methylcitrate (2-MC) and CoA (PubMed:14702315). Catalyzes the condensation of oxaloacetate with acetyl-CoA (By similarity).</text>
</comment>
<comment type="catalytic activity">
    <reaction evidence="3">
        <text>propanoyl-CoA + oxaloacetate + H2O = (2S,3S)-2-methylcitrate + CoA + H(+)</text>
        <dbReference type="Rhea" id="RHEA:23780"/>
        <dbReference type="ChEBI" id="CHEBI:15377"/>
        <dbReference type="ChEBI" id="CHEBI:15378"/>
        <dbReference type="ChEBI" id="CHEBI:16452"/>
        <dbReference type="ChEBI" id="CHEBI:57287"/>
        <dbReference type="ChEBI" id="CHEBI:57392"/>
        <dbReference type="ChEBI" id="CHEBI:58853"/>
        <dbReference type="EC" id="2.3.3.5"/>
    </reaction>
</comment>
<comment type="catalytic activity">
    <reaction evidence="3">
        <text>oxaloacetate + acetyl-CoA + H2O = citrate + CoA + H(+)</text>
        <dbReference type="Rhea" id="RHEA:16845"/>
        <dbReference type="ChEBI" id="CHEBI:15377"/>
        <dbReference type="ChEBI" id="CHEBI:15378"/>
        <dbReference type="ChEBI" id="CHEBI:16452"/>
        <dbReference type="ChEBI" id="CHEBI:16947"/>
        <dbReference type="ChEBI" id="CHEBI:57287"/>
        <dbReference type="ChEBI" id="CHEBI:57288"/>
        <dbReference type="EC" id="2.3.3.16"/>
    </reaction>
</comment>
<comment type="pathway">
    <text evidence="6">Organic acid metabolism; propanoate degradation.</text>
</comment>
<comment type="pathway">
    <text evidence="6">Carbohydrate metabolism; tricarboxylic acid cycle; isocitrate from oxaloacetate: step 1/2.</text>
</comment>
<comment type="subunit">
    <text evidence="3">Homodimer.</text>
</comment>
<comment type="similarity">
    <text evidence="6">Belongs to the citrate synthase family.</text>
</comment>
<accession>Q8EJW2</accession>
<organism>
    <name type="scientific">Shewanella oneidensis (strain ATCC 700550 / JCM 31522 / CIP 106686 / LMG 19005 / NCIMB 14063 / MR-1)</name>
    <dbReference type="NCBI Taxonomy" id="211586"/>
    <lineage>
        <taxon>Bacteria</taxon>
        <taxon>Pseudomonadati</taxon>
        <taxon>Pseudomonadota</taxon>
        <taxon>Gammaproteobacteria</taxon>
        <taxon>Alteromonadales</taxon>
        <taxon>Shewanellaceae</taxon>
        <taxon>Shewanella</taxon>
    </lineage>
</organism>
<gene>
    <name type="primary">prpC</name>
    <name type="ordered locus">SO_0344</name>
</gene>
<protein>
    <recommendedName>
        <fullName evidence="5">2-methylcitrate synthase</fullName>
        <shortName evidence="5">2-MCS</shortName>
        <shortName evidence="5">MCS</shortName>
        <ecNumber evidence="3">2.3.3.5</ecNumber>
    </recommendedName>
    <alternativeName>
        <fullName evidence="3">Citrate synthase</fullName>
        <ecNumber evidence="3">2.3.3.16</ecNumber>
    </alternativeName>
</protein>
<sequence length="375" mass="41431">MSDAKKLTGAGLRGQSAGETALSTVGVSGSGLTYRGYDVKDLAENATFEEVAYLILYGELPTTAQLAAYKTKLKGMRGLPQALKEVLERIPADAHPMDVMRTGCSMLGNLEAEHSFSEQSQIADRLLAAFPSIICYWYRFSHDGVRIDTETDDDQIGAHFLHLLHGKAPSALHTKVMDVSLILYAEHEFNASTFTARVCASTLSDMHSCVTGAIGSLRGPLHGGANEAAMELIQDMKDEADARDVLMGKLERKEKIMGFGHAIYRDSDPRNAIIKEWSEKLAADYGDDRLYRVSVACEALMWEQKKLFCNADFFHASAYHFMGIPTKLFTPIFVCSRVTGWTAHVMEQRSNNRIIRPSADYVGVSPRKVIPIANR</sequence>
<reference key="1">
    <citation type="journal article" date="2002" name="Nat. Biotechnol.">
        <title>Genome sequence of the dissimilatory metal ion-reducing bacterium Shewanella oneidensis.</title>
        <authorList>
            <person name="Heidelberg J.F."/>
            <person name="Paulsen I.T."/>
            <person name="Nelson K.E."/>
            <person name="Gaidos E.J."/>
            <person name="Nelson W.C."/>
            <person name="Read T.D."/>
            <person name="Eisen J.A."/>
            <person name="Seshadri R."/>
            <person name="Ward N.L."/>
            <person name="Methe B.A."/>
            <person name="Clayton R.A."/>
            <person name="Meyer T."/>
            <person name="Tsapin A."/>
            <person name="Scott J."/>
            <person name="Beanan M.J."/>
            <person name="Brinkac L.M."/>
            <person name="Daugherty S.C."/>
            <person name="DeBoy R.T."/>
            <person name="Dodson R.J."/>
            <person name="Durkin A.S."/>
            <person name="Haft D.H."/>
            <person name="Kolonay J.F."/>
            <person name="Madupu R."/>
            <person name="Peterson J.D."/>
            <person name="Umayam L.A."/>
            <person name="White O."/>
            <person name="Wolf A.M."/>
            <person name="Vamathevan J.J."/>
            <person name="Weidman J.F."/>
            <person name="Impraim M."/>
            <person name="Lee K."/>
            <person name="Berry K.J."/>
            <person name="Lee C."/>
            <person name="Mueller J."/>
            <person name="Khouri H.M."/>
            <person name="Gill J."/>
            <person name="Utterback T.R."/>
            <person name="McDonald L.A."/>
            <person name="Feldblyum T.V."/>
            <person name="Smith H.O."/>
            <person name="Venter J.C."/>
            <person name="Nealson K.H."/>
            <person name="Fraser C.M."/>
        </authorList>
    </citation>
    <scope>NUCLEOTIDE SEQUENCE [LARGE SCALE GENOMIC DNA]</scope>
    <source>
        <strain>ATCC 700550 / JCM 31522 / CIP 106686 / LMG 19005 / NCIMB 14063 / MR-1</strain>
    </source>
</reference>
<reference key="2">
    <citation type="journal article" date="2004" name="J. Bacteriol.">
        <title>The acnD genes of Shewenella oneidensis and Vibrio cholerae encode a new Fe/S-dependent 2-methylcitrate dehydratase enzyme that requires prpF function in vivo.</title>
        <authorList>
            <person name="Grimek T.L."/>
            <person name="Escalante-Semerena J.C."/>
        </authorList>
    </citation>
    <scope>FUNCTION</scope>
    <source>
        <strain>ATCC 700550 / JCM 31522 / CIP 106686 / LMG 19005 / NCIMB 14063 / MR-1</strain>
    </source>
</reference>
<dbReference type="EC" id="2.3.3.5" evidence="3"/>
<dbReference type="EC" id="2.3.3.16" evidence="3"/>
<dbReference type="EMBL" id="AE014299">
    <property type="protein sequence ID" value="AAN53429.1"/>
    <property type="molecule type" value="Genomic_DNA"/>
</dbReference>
<dbReference type="RefSeq" id="NP_715984.1">
    <property type="nucleotide sequence ID" value="NC_004347.2"/>
</dbReference>
<dbReference type="RefSeq" id="WP_011070709.1">
    <property type="nucleotide sequence ID" value="NC_004347.2"/>
</dbReference>
<dbReference type="SMR" id="Q8EJW2"/>
<dbReference type="STRING" id="211586.SO_0344"/>
<dbReference type="PaxDb" id="211586-SO_0344"/>
<dbReference type="KEGG" id="son:SO_0344"/>
<dbReference type="PATRIC" id="fig|211586.12.peg.334"/>
<dbReference type="eggNOG" id="COG0372">
    <property type="taxonomic scope" value="Bacteria"/>
</dbReference>
<dbReference type="HOGENOM" id="CLU_025068_2_1_6"/>
<dbReference type="OrthoDB" id="9800864at2"/>
<dbReference type="PhylomeDB" id="Q8EJW2"/>
<dbReference type="BioCyc" id="SONE211586:G1GMP-329-MONOMER"/>
<dbReference type="UniPathway" id="UPA00223">
    <property type="reaction ID" value="UER00717"/>
</dbReference>
<dbReference type="UniPathway" id="UPA00946"/>
<dbReference type="Proteomes" id="UP000008186">
    <property type="component" value="Chromosome"/>
</dbReference>
<dbReference type="GO" id="GO:0005737">
    <property type="term" value="C:cytoplasm"/>
    <property type="evidence" value="ECO:0007669"/>
    <property type="project" value="InterPro"/>
</dbReference>
<dbReference type="GO" id="GO:0050440">
    <property type="term" value="F:2-methylcitrate synthase activity"/>
    <property type="evidence" value="ECO:0000314"/>
    <property type="project" value="UniProtKB"/>
</dbReference>
<dbReference type="GO" id="GO:0004108">
    <property type="term" value="F:citrate (Si)-synthase activity"/>
    <property type="evidence" value="ECO:0000318"/>
    <property type="project" value="GO_Central"/>
</dbReference>
<dbReference type="GO" id="GO:0036440">
    <property type="term" value="F:citrate synthase activity"/>
    <property type="evidence" value="ECO:0000250"/>
    <property type="project" value="UniProtKB"/>
</dbReference>
<dbReference type="GO" id="GO:0005975">
    <property type="term" value="P:carbohydrate metabolic process"/>
    <property type="evidence" value="ECO:0000318"/>
    <property type="project" value="GO_Central"/>
</dbReference>
<dbReference type="GO" id="GO:0019679">
    <property type="term" value="P:propionate metabolic process, methylcitrate cycle"/>
    <property type="evidence" value="ECO:0000318"/>
    <property type="project" value="GO_Central"/>
</dbReference>
<dbReference type="GO" id="GO:0006099">
    <property type="term" value="P:tricarboxylic acid cycle"/>
    <property type="evidence" value="ECO:0000318"/>
    <property type="project" value="GO_Central"/>
</dbReference>
<dbReference type="CDD" id="cd06108">
    <property type="entry name" value="Ec2MCS_like"/>
    <property type="match status" value="1"/>
</dbReference>
<dbReference type="FunFam" id="1.10.230.10:FF:000003">
    <property type="entry name" value="Citrate synthase"/>
    <property type="match status" value="1"/>
</dbReference>
<dbReference type="Gene3D" id="1.10.580.10">
    <property type="entry name" value="Citrate Synthase, domain 1"/>
    <property type="match status" value="1"/>
</dbReference>
<dbReference type="Gene3D" id="1.10.230.10">
    <property type="entry name" value="Cytochrome P450-Terp, domain 2"/>
    <property type="match status" value="1"/>
</dbReference>
<dbReference type="InterPro" id="IPR011278">
    <property type="entry name" value="2-MeCitrate/Citrate_synth_II"/>
</dbReference>
<dbReference type="InterPro" id="IPR016142">
    <property type="entry name" value="Citrate_synth-like_lrg_a-sub"/>
</dbReference>
<dbReference type="InterPro" id="IPR016143">
    <property type="entry name" value="Citrate_synth-like_sm_a-sub"/>
</dbReference>
<dbReference type="InterPro" id="IPR002020">
    <property type="entry name" value="Citrate_synthase"/>
</dbReference>
<dbReference type="InterPro" id="IPR019810">
    <property type="entry name" value="Citrate_synthase_AS"/>
</dbReference>
<dbReference type="InterPro" id="IPR024176">
    <property type="entry name" value="Citrate_synthase_bac-typ"/>
</dbReference>
<dbReference type="InterPro" id="IPR036969">
    <property type="entry name" value="Citrate_synthase_sf"/>
</dbReference>
<dbReference type="NCBIfam" id="TIGR01800">
    <property type="entry name" value="cit_synth_II"/>
    <property type="match status" value="1"/>
</dbReference>
<dbReference type="NCBIfam" id="NF009006">
    <property type="entry name" value="PRK12351.1"/>
    <property type="match status" value="1"/>
</dbReference>
<dbReference type="PANTHER" id="PTHR11739">
    <property type="entry name" value="CITRATE SYNTHASE"/>
    <property type="match status" value="1"/>
</dbReference>
<dbReference type="PANTHER" id="PTHR11739:SF25">
    <property type="entry name" value="CITRATE SYNTHASE-RELATED PROTEIN DDB_G0287281"/>
    <property type="match status" value="1"/>
</dbReference>
<dbReference type="Pfam" id="PF00285">
    <property type="entry name" value="Citrate_synt"/>
    <property type="match status" value="1"/>
</dbReference>
<dbReference type="PIRSF" id="PIRSF001369">
    <property type="entry name" value="Citrate_synth"/>
    <property type="match status" value="1"/>
</dbReference>
<dbReference type="PRINTS" id="PR00143">
    <property type="entry name" value="CITRTSNTHASE"/>
</dbReference>
<dbReference type="SUPFAM" id="SSF48256">
    <property type="entry name" value="Citrate synthase"/>
    <property type="match status" value="1"/>
</dbReference>
<dbReference type="PROSITE" id="PS00480">
    <property type="entry name" value="CITRATE_SYNTHASE"/>
    <property type="match status" value="1"/>
</dbReference>
<evidence type="ECO:0000250" key="1">
    <source>
        <dbReference type="UniProtKB" id="I6Y9Q3"/>
    </source>
</evidence>
<evidence type="ECO:0000250" key="2">
    <source>
        <dbReference type="UniProtKB" id="O34002"/>
    </source>
</evidence>
<evidence type="ECO:0000250" key="3">
    <source>
        <dbReference type="UniProtKB" id="P31660"/>
    </source>
</evidence>
<evidence type="ECO:0000269" key="4">
    <source>
    </source>
</evidence>
<evidence type="ECO:0000303" key="5">
    <source>
    </source>
</evidence>
<evidence type="ECO:0000305" key="6"/>
<feature type="chain" id="PRO_0000432971" description="2-methylcitrate synthase">
    <location>
        <begin position="1"/>
        <end position="375"/>
    </location>
</feature>
<feature type="active site" evidence="2">
    <location>
        <position position="222"/>
    </location>
</feature>
<feature type="active site" evidence="2">
    <location>
        <position position="261"/>
    </location>
</feature>
<feature type="active site" evidence="2">
    <location>
        <position position="312"/>
    </location>
</feature>
<feature type="binding site" evidence="1">
    <location>
        <position position="72"/>
    </location>
    <ligand>
        <name>substrate</name>
    </ligand>
</feature>
<feature type="binding site" evidence="1">
    <location>
        <position position="187"/>
    </location>
    <ligand>
        <name>substrate</name>
    </ligand>
</feature>
<feature type="binding site" evidence="2">
    <location>
        <begin position="255"/>
        <end position="259"/>
    </location>
    <ligand>
        <name>CoA</name>
        <dbReference type="ChEBI" id="CHEBI:57287"/>
    </ligand>
</feature>
<feature type="binding site" evidence="1">
    <location>
        <position position="270"/>
    </location>
    <ligand>
        <name>substrate</name>
    </ligand>
</feature>
<feature type="binding site" evidence="1">
    <location>
        <position position="337"/>
    </location>
    <ligand>
        <name>substrate</name>
    </ligand>
</feature>
<feature type="binding site" evidence="1">
    <location>
        <position position="356"/>
    </location>
    <ligand>
        <name>substrate</name>
    </ligand>
</feature>
<name>PRPC_SHEON</name>
<proteinExistence type="inferred from homology"/>